<accession>A9A6C8</accession>
<evidence type="ECO:0000255" key="1">
    <source>
        <dbReference type="HAMAP-Rule" id="MF_00351"/>
    </source>
</evidence>
<keyword id="KW-0489">Methyltransferase</keyword>
<keyword id="KW-0694">RNA-binding</keyword>
<keyword id="KW-0698">rRNA processing</keyword>
<keyword id="KW-0808">Transferase</keyword>
<keyword id="KW-0819">tRNA processing</keyword>
<comment type="function">
    <text evidence="1">Involved in pre-rRNA and tRNA processing. Utilizes the methyl donor S-adenosyl-L-methionine to catalyze the site-specific 2'-hydroxyl methylation of ribose moieties in rRNA and tRNA. Site specificity is provided by a guide RNA that base pairs with the substrate. Methylation occurs at a characteristic distance from the sequence involved in base pairing with the guide RNA.</text>
</comment>
<comment type="subunit">
    <text evidence="1">Interacts with nop5. Component of box C/D small ribonucleoprotein (sRNP) particles that contain rpl7ae, FlpA and nop5, plus a guide RNA.</text>
</comment>
<comment type="similarity">
    <text evidence="1">Belongs to the methyltransferase superfamily. Fibrillarin family.</text>
</comment>
<name>FLPA_METM6</name>
<organism>
    <name type="scientific">Methanococcus maripaludis (strain C6 / ATCC BAA-1332)</name>
    <dbReference type="NCBI Taxonomy" id="444158"/>
    <lineage>
        <taxon>Archaea</taxon>
        <taxon>Methanobacteriati</taxon>
        <taxon>Methanobacteriota</taxon>
        <taxon>Methanomada group</taxon>
        <taxon>Methanococci</taxon>
        <taxon>Methanococcales</taxon>
        <taxon>Methanococcaceae</taxon>
        <taxon>Methanococcus</taxon>
    </lineage>
</organism>
<dbReference type="EC" id="2.1.1.-" evidence="1"/>
<dbReference type="EMBL" id="CP000867">
    <property type="protein sequence ID" value="ABX01116.1"/>
    <property type="molecule type" value="Genomic_DNA"/>
</dbReference>
<dbReference type="SMR" id="A9A6C8"/>
<dbReference type="STRING" id="444158.MmarC6_0295"/>
<dbReference type="KEGG" id="mmx:MmarC6_0295"/>
<dbReference type="eggNOG" id="arCOG00078">
    <property type="taxonomic scope" value="Archaea"/>
</dbReference>
<dbReference type="HOGENOM" id="CLU_059055_2_0_2"/>
<dbReference type="OrthoDB" id="6244at2157"/>
<dbReference type="PhylomeDB" id="A9A6C8"/>
<dbReference type="GO" id="GO:1990259">
    <property type="term" value="F:histone H2AQ104 methyltransferase activity"/>
    <property type="evidence" value="ECO:0007669"/>
    <property type="project" value="TreeGrafter"/>
</dbReference>
<dbReference type="GO" id="GO:0003723">
    <property type="term" value="F:RNA binding"/>
    <property type="evidence" value="ECO:0007669"/>
    <property type="project" value="UniProtKB-UniRule"/>
</dbReference>
<dbReference type="GO" id="GO:0008649">
    <property type="term" value="F:rRNA methyltransferase activity"/>
    <property type="evidence" value="ECO:0007669"/>
    <property type="project" value="TreeGrafter"/>
</dbReference>
<dbReference type="GO" id="GO:0000494">
    <property type="term" value="P:box C/D sno(s)RNA 3'-end processing"/>
    <property type="evidence" value="ECO:0007669"/>
    <property type="project" value="TreeGrafter"/>
</dbReference>
<dbReference type="GO" id="GO:0008033">
    <property type="term" value="P:tRNA processing"/>
    <property type="evidence" value="ECO:0007669"/>
    <property type="project" value="UniProtKB-UniRule"/>
</dbReference>
<dbReference type="CDD" id="cd02440">
    <property type="entry name" value="AdoMet_MTases"/>
    <property type="match status" value="1"/>
</dbReference>
<dbReference type="Gene3D" id="3.30.200.20">
    <property type="entry name" value="Phosphorylase Kinase, domain 1"/>
    <property type="match status" value="1"/>
</dbReference>
<dbReference type="Gene3D" id="3.40.50.150">
    <property type="entry name" value="Vaccinia Virus protein VP39"/>
    <property type="match status" value="1"/>
</dbReference>
<dbReference type="HAMAP" id="MF_00351">
    <property type="entry name" value="RNA_methyltransf_FlpA"/>
    <property type="match status" value="1"/>
</dbReference>
<dbReference type="InterPro" id="IPR000692">
    <property type="entry name" value="Fibrillarin"/>
</dbReference>
<dbReference type="InterPro" id="IPR020813">
    <property type="entry name" value="Fibrillarin_CS"/>
</dbReference>
<dbReference type="InterPro" id="IPR029063">
    <property type="entry name" value="SAM-dependent_MTases_sf"/>
</dbReference>
<dbReference type="NCBIfam" id="NF003276">
    <property type="entry name" value="PRK04266.1-2"/>
    <property type="match status" value="1"/>
</dbReference>
<dbReference type="NCBIfam" id="NF003277">
    <property type="entry name" value="PRK04266.1-3"/>
    <property type="match status" value="1"/>
</dbReference>
<dbReference type="NCBIfam" id="NF003279">
    <property type="entry name" value="PRK04266.1-5"/>
    <property type="match status" value="1"/>
</dbReference>
<dbReference type="PANTHER" id="PTHR10335:SF17">
    <property type="entry name" value="FIBRILLARIN"/>
    <property type="match status" value="1"/>
</dbReference>
<dbReference type="PANTHER" id="PTHR10335">
    <property type="entry name" value="RRNA 2-O-METHYLTRANSFERASE FIBRILLARIN"/>
    <property type="match status" value="1"/>
</dbReference>
<dbReference type="Pfam" id="PF01269">
    <property type="entry name" value="Fibrillarin"/>
    <property type="match status" value="1"/>
</dbReference>
<dbReference type="PIRSF" id="PIRSF006540">
    <property type="entry name" value="Nop17p"/>
    <property type="match status" value="1"/>
</dbReference>
<dbReference type="PRINTS" id="PR00052">
    <property type="entry name" value="FIBRILLARIN"/>
</dbReference>
<dbReference type="SMART" id="SM01206">
    <property type="entry name" value="Fibrillarin"/>
    <property type="match status" value="1"/>
</dbReference>
<dbReference type="SUPFAM" id="SSF53335">
    <property type="entry name" value="S-adenosyl-L-methionine-dependent methyltransferases"/>
    <property type="match status" value="1"/>
</dbReference>
<dbReference type="PROSITE" id="PS00566">
    <property type="entry name" value="FIBRILLARIN"/>
    <property type="match status" value="1"/>
</dbReference>
<proteinExistence type="inferred from homology"/>
<sequence length="230" mass="25969">MEKIKVREIFNNAYSVDFGDGLKRIATKSLVPGKRVYGEKLVYSDNIEYRVWNPNKSKLGAAIINGLKKMPIKKGTKVLYLGASAGTTPSHVADIAETSLVYALEFAPRIMREFIDSCNERKNLIPVLGDANRPQDYSNIVEKVDVIFEDVAQPNQAEILVKNAKWFLKENGYAMISIKARSVDVTKNPREIFAEQKKILIEGGFEIVDEVNIEPFEKDHMMMVGIWKGN</sequence>
<gene>
    <name evidence="1" type="primary">flpA</name>
    <name type="ordered locus">MmarC6_0295</name>
</gene>
<feature type="chain" id="PRO_1000120517" description="Fibrillarin-like rRNA/tRNA 2'-O-methyltransferase">
    <location>
        <begin position="1"/>
        <end position="230"/>
    </location>
</feature>
<feature type="binding site" evidence="1">
    <location>
        <begin position="87"/>
        <end position="88"/>
    </location>
    <ligand>
        <name>S-adenosyl-L-methionine</name>
        <dbReference type="ChEBI" id="CHEBI:59789"/>
    </ligand>
</feature>
<feature type="binding site" evidence="1">
    <location>
        <begin position="105"/>
        <end position="106"/>
    </location>
    <ligand>
        <name>S-adenosyl-L-methionine</name>
        <dbReference type="ChEBI" id="CHEBI:59789"/>
    </ligand>
</feature>
<feature type="binding site" evidence="1">
    <location>
        <begin position="130"/>
        <end position="131"/>
    </location>
    <ligand>
        <name>S-adenosyl-L-methionine</name>
        <dbReference type="ChEBI" id="CHEBI:59789"/>
    </ligand>
</feature>
<feature type="binding site" evidence="1">
    <location>
        <begin position="150"/>
        <end position="153"/>
    </location>
    <ligand>
        <name>S-adenosyl-L-methionine</name>
        <dbReference type="ChEBI" id="CHEBI:59789"/>
    </ligand>
</feature>
<protein>
    <recommendedName>
        <fullName evidence="1">Fibrillarin-like rRNA/tRNA 2'-O-methyltransferase</fullName>
        <ecNumber evidence="1">2.1.1.-</ecNumber>
    </recommendedName>
</protein>
<reference key="1">
    <citation type="submission" date="2007-10" db="EMBL/GenBank/DDBJ databases">
        <title>Complete sequence of Methanococcus maripaludis C6.</title>
        <authorList>
            <consortium name="US DOE Joint Genome Institute"/>
            <person name="Copeland A."/>
            <person name="Lucas S."/>
            <person name="Lapidus A."/>
            <person name="Barry K."/>
            <person name="Glavina del Rio T."/>
            <person name="Dalin E."/>
            <person name="Tice H."/>
            <person name="Pitluck S."/>
            <person name="Clum A."/>
            <person name="Schmutz J."/>
            <person name="Larimer F."/>
            <person name="Land M."/>
            <person name="Hauser L."/>
            <person name="Kyrpides N."/>
            <person name="Mikhailova N."/>
            <person name="Sieprawska-Lupa M."/>
            <person name="Whitman W.B."/>
            <person name="Richardson P."/>
        </authorList>
    </citation>
    <scope>NUCLEOTIDE SEQUENCE [LARGE SCALE GENOMIC DNA]</scope>
    <source>
        <strain>C6 / ATCC BAA-1332</strain>
    </source>
</reference>